<reference key="1">
    <citation type="submission" date="2007-11" db="EMBL/GenBank/DDBJ databases">
        <title>Genome sequencing of phylogenetically and phenotypically diverse Coxiella burnetii isolates.</title>
        <authorList>
            <person name="Seshadri R."/>
            <person name="Samuel J.E."/>
        </authorList>
    </citation>
    <scope>NUCLEOTIDE SEQUENCE [LARGE SCALE GENOMIC DNA]</scope>
    <source>
        <strain>RSA 331 / Henzerling II</strain>
    </source>
</reference>
<feature type="chain" id="PRO_0000344291" description="Small ribosomal subunit protein uS7">
    <location>
        <begin position="1"/>
        <end position="191"/>
    </location>
</feature>
<feature type="region of interest" description="Disordered" evidence="2">
    <location>
        <begin position="56"/>
        <end position="80"/>
    </location>
</feature>
<keyword id="KW-0687">Ribonucleoprotein</keyword>
<keyword id="KW-0689">Ribosomal protein</keyword>
<keyword id="KW-0694">RNA-binding</keyword>
<keyword id="KW-0699">rRNA-binding</keyword>
<keyword id="KW-0820">tRNA-binding</keyword>
<sequence>MARRKAAPKRETLPDPLFHSELLAKFINAVMRNGKKSVAEKIVYGALDVVAKRVQNKSGEQGDGDGESGGKAGGIKKRSLGDIRTDENARALALETFKGALDKVMPNVEVKSRRVGGSTYQVPVEIRMARRQALARRWLVEYANKRNEKTMVLRLAHEILDAVEGRGGAIKKREDVHRMAKANQAFAHYRW</sequence>
<proteinExistence type="inferred from homology"/>
<evidence type="ECO:0000255" key="1">
    <source>
        <dbReference type="HAMAP-Rule" id="MF_00480"/>
    </source>
</evidence>
<evidence type="ECO:0000256" key="2">
    <source>
        <dbReference type="SAM" id="MobiDB-lite"/>
    </source>
</evidence>
<evidence type="ECO:0000305" key="3"/>
<protein>
    <recommendedName>
        <fullName evidence="1">Small ribosomal subunit protein uS7</fullName>
    </recommendedName>
    <alternativeName>
        <fullName evidence="3">30S ribosomal protein S7</fullName>
    </alternativeName>
</protein>
<accession>A9NAM0</accession>
<gene>
    <name evidence="1" type="primary">rpsG</name>
    <name type="ordered locus">COXBURSA331_A0333</name>
</gene>
<comment type="function">
    <text evidence="1">One of the primary rRNA binding proteins, it binds directly to 16S rRNA where it nucleates assembly of the head domain of the 30S subunit. Is located at the subunit interface close to the decoding center, probably blocks exit of the E-site tRNA.</text>
</comment>
<comment type="subunit">
    <text evidence="1">Part of the 30S ribosomal subunit. Contacts proteins S9 and S11.</text>
</comment>
<comment type="similarity">
    <text evidence="1">Belongs to the universal ribosomal protein uS7 family.</text>
</comment>
<dbReference type="EMBL" id="CP000890">
    <property type="protein sequence ID" value="ABX78299.1"/>
    <property type="molecule type" value="Genomic_DNA"/>
</dbReference>
<dbReference type="RefSeq" id="WP_005771622.1">
    <property type="nucleotide sequence ID" value="NC_010117.1"/>
</dbReference>
<dbReference type="SMR" id="A9NAM0"/>
<dbReference type="KEGG" id="cbs:COXBURSA331_A0333"/>
<dbReference type="HOGENOM" id="CLU_072226_1_1_6"/>
<dbReference type="GO" id="GO:0015935">
    <property type="term" value="C:small ribosomal subunit"/>
    <property type="evidence" value="ECO:0007669"/>
    <property type="project" value="InterPro"/>
</dbReference>
<dbReference type="GO" id="GO:0019843">
    <property type="term" value="F:rRNA binding"/>
    <property type="evidence" value="ECO:0007669"/>
    <property type="project" value="UniProtKB-UniRule"/>
</dbReference>
<dbReference type="GO" id="GO:0003735">
    <property type="term" value="F:structural constituent of ribosome"/>
    <property type="evidence" value="ECO:0007669"/>
    <property type="project" value="InterPro"/>
</dbReference>
<dbReference type="GO" id="GO:0000049">
    <property type="term" value="F:tRNA binding"/>
    <property type="evidence" value="ECO:0007669"/>
    <property type="project" value="UniProtKB-UniRule"/>
</dbReference>
<dbReference type="GO" id="GO:0006412">
    <property type="term" value="P:translation"/>
    <property type="evidence" value="ECO:0007669"/>
    <property type="project" value="UniProtKB-UniRule"/>
</dbReference>
<dbReference type="CDD" id="cd14869">
    <property type="entry name" value="uS7_Bacteria"/>
    <property type="match status" value="1"/>
</dbReference>
<dbReference type="Gene3D" id="1.10.455.10">
    <property type="entry name" value="Ribosomal protein S7 domain"/>
    <property type="match status" value="1"/>
</dbReference>
<dbReference type="HAMAP" id="MF_00480_B">
    <property type="entry name" value="Ribosomal_uS7_B"/>
    <property type="match status" value="1"/>
</dbReference>
<dbReference type="InterPro" id="IPR000235">
    <property type="entry name" value="Ribosomal_uS7"/>
</dbReference>
<dbReference type="InterPro" id="IPR005717">
    <property type="entry name" value="Ribosomal_uS7_bac/org-type"/>
</dbReference>
<dbReference type="InterPro" id="IPR020606">
    <property type="entry name" value="Ribosomal_uS7_CS"/>
</dbReference>
<dbReference type="InterPro" id="IPR023798">
    <property type="entry name" value="Ribosomal_uS7_dom"/>
</dbReference>
<dbReference type="InterPro" id="IPR036823">
    <property type="entry name" value="Ribosomal_uS7_dom_sf"/>
</dbReference>
<dbReference type="NCBIfam" id="TIGR01029">
    <property type="entry name" value="rpsG_bact"/>
    <property type="match status" value="1"/>
</dbReference>
<dbReference type="PANTHER" id="PTHR11205">
    <property type="entry name" value="RIBOSOMAL PROTEIN S7"/>
    <property type="match status" value="1"/>
</dbReference>
<dbReference type="Pfam" id="PF00177">
    <property type="entry name" value="Ribosomal_S7"/>
    <property type="match status" value="1"/>
</dbReference>
<dbReference type="PIRSF" id="PIRSF002122">
    <property type="entry name" value="RPS7p_RPS7a_RPS5e_RPS7o"/>
    <property type="match status" value="1"/>
</dbReference>
<dbReference type="SUPFAM" id="SSF47973">
    <property type="entry name" value="Ribosomal protein S7"/>
    <property type="match status" value="1"/>
</dbReference>
<dbReference type="PROSITE" id="PS00052">
    <property type="entry name" value="RIBOSOMAL_S7"/>
    <property type="match status" value="1"/>
</dbReference>
<name>RS7_COXBR</name>
<organism>
    <name type="scientific">Coxiella burnetii (strain RSA 331 / Henzerling II)</name>
    <dbReference type="NCBI Taxonomy" id="360115"/>
    <lineage>
        <taxon>Bacteria</taxon>
        <taxon>Pseudomonadati</taxon>
        <taxon>Pseudomonadota</taxon>
        <taxon>Gammaproteobacteria</taxon>
        <taxon>Legionellales</taxon>
        <taxon>Coxiellaceae</taxon>
        <taxon>Coxiella</taxon>
    </lineage>
</organism>